<sequence length="230" mass="25215">MTTLTARPEAITFDPQQSALIVVDMQNAYATPGGYLDLAGFDVSTTRPVIANIQTAVTAARAAGMLIIWFQNGWDEQYVEAGGPGSPNFHKSNALKTMRNQPQLQGKLLAKGSWDYQLVDELVPQPGDIVLPKPRYSGFFNTPLDSILRSRGIRHLVFTGIATNVCVESTLRDGFFLEYFGVVLEDATHQAGPEFAQKAALFNIETFFGWVSDVETFCDALSPTSFARIA</sequence>
<name>RUTB_ECO10</name>
<organism>
    <name type="scientific">Escherichia coli O103:H2 (strain 12009 / EHEC)</name>
    <dbReference type="NCBI Taxonomy" id="585395"/>
    <lineage>
        <taxon>Bacteria</taxon>
        <taxon>Pseudomonadati</taxon>
        <taxon>Pseudomonadota</taxon>
        <taxon>Gammaproteobacteria</taxon>
        <taxon>Enterobacterales</taxon>
        <taxon>Enterobacteriaceae</taxon>
        <taxon>Escherichia</taxon>
    </lineage>
</organism>
<reference key="1">
    <citation type="journal article" date="2009" name="Proc. Natl. Acad. Sci. U.S.A.">
        <title>Comparative genomics reveal the mechanism of the parallel evolution of O157 and non-O157 enterohemorrhagic Escherichia coli.</title>
        <authorList>
            <person name="Ogura Y."/>
            <person name="Ooka T."/>
            <person name="Iguchi A."/>
            <person name="Toh H."/>
            <person name="Asadulghani M."/>
            <person name="Oshima K."/>
            <person name="Kodama T."/>
            <person name="Abe H."/>
            <person name="Nakayama K."/>
            <person name="Kurokawa K."/>
            <person name="Tobe T."/>
            <person name="Hattori M."/>
            <person name="Hayashi T."/>
        </authorList>
    </citation>
    <scope>NUCLEOTIDE SEQUENCE [LARGE SCALE GENOMIC DNA]</scope>
    <source>
        <strain>12009 / EHEC</strain>
    </source>
</reference>
<comment type="function">
    <text evidence="1">Hydrolyzes ureidoacrylate to form aminoacrylate and carbamate. The carbamate hydrolyzes spontaneously, thereby releasing one of the nitrogen atoms of the pyrimidine ring as ammonia and one of its carbon atoms as CO2.</text>
</comment>
<comment type="catalytic activity">
    <reaction evidence="1">
        <text>(Z)-3-ureidoacrylate + H2O + H(+) = (Z)-3-aminoacrylate + NH4(+) + CO2</text>
        <dbReference type="Rhea" id="RHEA:42624"/>
        <dbReference type="ChEBI" id="CHEBI:15377"/>
        <dbReference type="ChEBI" id="CHEBI:15378"/>
        <dbReference type="ChEBI" id="CHEBI:16526"/>
        <dbReference type="ChEBI" id="CHEBI:28938"/>
        <dbReference type="ChEBI" id="CHEBI:59891"/>
        <dbReference type="ChEBI" id="CHEBI:59894"/>
        <dbReference type="EC" id="3.5.1.110"/>
    </reaction>
</comment>
<comment type="catalytic activity">
    <reaction evidence="1">
        <text>(Z)-3-ureidoacrylate + H2O = (Z)-3-aminoacrylate + carbamate + H(+)</text>
        <dbReference type="Rhea" id="RHEA:31603"/>
        <dbReference type="ChEBI" id="CHEBI:13941"/>
        <dbReference type="ChEBI" id="CHEBI:15377"/>
        <dbReference type="ChEBI" id="CHEBI:15378"/>
        <dbReference type="ChEBI" id="CHEBI:59891"/>
        <dbReference type="ChEBI" id="CHEBI:59894"/>
    </reaction>
</comment>
<comment type="catalytic activity">
    <reaction evidence="1">
        <text>(Z)-2-methylureidoacrylate + H2O + H(+) = (Z)-2-methylaminoacrylate + NH4(+) + CO2</text>
        <dbReference type="Rhea" id="RHEA:42620"/>
        <dbReference type="ChEBI" id="CHEBI:15377"/>
        <dbReference type="ChEBI" id="CHEBI:15378"/>
        <dbReference type="ChEBI" id="CHEBI:16526"/>
        <dbReference type="ChEBI" id="CHEBI:28938"/>
        <dbReference type="ChEBI" id="CHEBI:143783"/>
        <dbReference type="ChEBI" id="CHEBI:145735"/>
        <dbReference type="EC" id="3.5.1.110"/>
    </reaction>
</comment>
<comment type="induction">
    <text evidence="1">Up-regulated by the nitrogen regulatory protein C (NtrC also called GlnG) and repressed by RutR.</text>
</comment>
<comment type="similarity">
    <text evidence="1">Belongs to the isochorismatase family. RutB subfamily.</text>
</comment>
<evidence type="ECO:0000255" key="1">
    <source>
        <dbReference type="HAMAP-Rule" id="MF_00830"/>
    </source>
</evidence>
<keyword id="KW-0378">Hydrolase</keyword>
<proteinExistence type="inferred from homology"/>
<protein>
    <recommendedName>
        <fullName evidence="1">Ureidoacrylate amidohydrolase RutB</fullName>
        <ecNumber evidence="1">3.5.1.110</ecNumber>
    </recommendedName>
</protein>
<gene>
    <name evidence="1" type="primary">rutB</name>
    <name type="ordered locus">ECO103_1057</name>
</gene>
<accession>C8U5H3</accession>
<dbReference type="EC" id="3.5.1.110" evidence="1"/>
<dbReference type="EMBL" id="AP010958">
    <property type="protein sequence ID" value="BAI29902.1"/>
    <property type="molecule type" value="Genomic_DNA"/>
</dbReference>
<dbReference type="RefSeq" id="WP_001387701.1">
    <property type="nucleotide sequence ID" value="NC_013353.1"/>
</dbReference>
<dbReference type="SMR" id="C8U5H3"/>
<dbReference type="KEGG" id="eoh:ECO103_1057"/>
<dbReference type="HOGENOM" id="CLU_068979_8_0_6"/>
<dbReference type="GO" id="GO:0016811">
    <property type="term" value="F:hydrolase activity, acting on carbon-nitrogen (but not peptide) bonds, in linear amides"/>
    <property type="evidence" value="ECO:0007669"/>
    <property type="project" value="UniProtKB-UniRule"/>
</dbReference>
<dbReference type="GO" id="GO:0019740">
    <property type="term" value="P:nitrogen utilization"/>
    <property type="evidence" value="ECO:0007669"/>
    <property type="project" value="UniProtKB-UniRule"/>
</dbReference>
<dbReference type="GO" id="GO:0006212">
    <property type="term" value="P:uracil catabolic process"/>
    <property type="evidence" value="ECO:0007669"/>
    <property type="project" value="UniProtKB-UniRule"/>
</dbReference>
<dbReference type="CDD" id="cd00431">
    <property type="entry name" value="cysteine_hydrolases"/>
    <property type="match status" value="1"/>
</dbReference>
<dbReference type="FunFam" id="3.40.50.850:FF:000004">
    <property type="entry name" value="Peroxyureidoacrylate/ureidoacrylate amidohydrolase RutB"/>
    <property type="match status" value="1"/>
</dbReference>
<dbReference type="Gene3D" id="3.40.50.850">
    <property type="entry name" value="Isochorismatase-like"/>
    <property type="match status" value="1"/>
</dbReference>
<dbReference type="HAMAP" id="MF_00830">
    <property type="entry name" value="RutB"/>
    <property type="match status" value="1"/>
</dbReference>
<dbReference type="InterPro" id="IPR000868">
    <property type="entry name" value="Isochorismatase-like_dom"/>
</dbReference>
<dbReference type="InterPro" id="IPR050272">
    <property type="entry name" value="Isochorismatase-like_hydrls"/>
</dbReference>
<dbReference type="InterPro" id="IPR036380">
    <property type="entry name" value="Isochorismatase-like_sf"/>
</dbReference>
<dbReference type="InterPro" id="IPR019916">
    <property type="entry name" value="RutB"/>
</dbReference>
<dbReference type="NCBIfam" id="TIGR03614">
    <property type="entry name" value="RutB"/>
    <property type="match status" value="1"/>
</dbReference>
<dbReference type="PANTHER" id="PTHR43540:SF6">
    <property type="entry name" value="ISOCHORISMATASE-LIKE DOMAIN-CONTAINING PROTEIN"/>
    <property type="match status" value="1"/>
</dbReference>
<dbReference type="PANTHER" id="PTHR43540">
    <property type="entry name" value="PEROXYUREIDOACRYLATE/UREIDOACRYLATE AMIDOHYDROLASE-RELATED"/>
    <property type="match status" value="1"/>
</dbReference>
<dbReference type="Pfam" id="PF00857">
    <property type="entry name" value="Isochorismatase"/>
    <property type="match status" value="1"/>
</dbReference>
<dbReference type="SUPFAM" id="SSF52499">
    <property type="entry name" value="Isochorismatase-like hydrolases"/>
    <property type="match status" value="1"/>
</dbReference>
<feature type="chain" id="PRO_0000402667" description="Ureidoacrylate amidohydrolase RutB">
    <location>
        <begin position="1"/>
        <end position="230"/>
    </location>
</feature>
<feature type="active site" description="Proton acceptor" evidence="1">
    <location>
        <position position="24"/>
    </location>
</feature>
<feature type="active site" evidence="1">
    <location>
        <position position="133"/>
    </location>
</feature>
<feature type="active site" description="Nucleophile" evidence="1">
    <location>
        <position position="166"/>
    </location>
</feature>